<proteinExistence type="inferred from homology"/>
<name>MINE_ACIBC</name>
<evidence type="ECO:0000255" key="1">
    <source>
        <dbReference type="HAMAP-Rule" id="MF_00262"/>
    </source>
</evidence>
<evidence type="ECO:0000256" key="2">
    <source>
        <dbReference type="SAM" id="MobiDB-lite"/>
    </source>
</evidence>
<feature type="chain" id="PRO_1000114195" description="Cell division topological specificity factor">
    <location>
        <begin position="1"/>
        <end position="90"/>
    </location>
</feature>
<feature type="region of interest" description="Disordered" evidence="2">
    <location>
        <begin position="1"/>
        <end position="21"/>
    </location>
</feature>
<feature type="compositionally biased region" description="Basic and acidic residues" evidence="2">
    <location>
        <begin position="10"/>
        <end position="21"/>
    </location>
</feature>
<organism>
    <name type="scientific">Acinetobacter baumannii (strain ACICU)</name>
    <dbReference type="NCBI Taxonomy" id="405416"/>
    <lineage>
        <taxon>Bacteria</taxon>
        <taxon>Pseudomonadati</taxon>
        <taxon>Pseudomonadota</taxon>
        <taxon>Gammaproteobacteria</taxon>
        <taxon>Moraxellales</taxon>
        <taxon>Moraxellaceae</taxon>
        <taxon>Acinetobacter</taxon>
        <taxon>Acinetobacter calcoaceticus/baumannii complex</taxon>
    </lineage>
</organism>
<accession>B2HUR7</accession>
<dbReference type="EMBL" id="CP000863">
    <property type="protein sequence ID" value="ACC56142.1"/>
    <property type="molecule type" value="Genomic_DNA"/>
</dbReference>
<dbReference type="RefSeq" id="WP_000896934.1">
    <property type="nucleotide sequence ID" value="NZ_CP031380.1"/>
</dbReference>
<dbReference type="GeneID" id="9383489"/>
<dbReference type="KEGG" id="abc:ACICU_00830"/>
<dbReference type="HOGENOM" id="CLU_137929_2_3_6"/>
<dbReference type="Proteomes" id="UP000008839">
    <property type="component" value="Chromosome"/>
</dbReference>
<dbReference type="GO" id="GO:0051301">
    <property type="term" value="P:cell division"/>
    <property type="evidence" value="ECO:0007669"/>
    <property type="project" value="UniProtKB-KW"/>
</dbReference>
<dbReference type="GO" id="GO:0032955">
    <property type="term" value="P:regulation of division septum assembly"/>
    <property type="evidence" value="ECO:0007669"/>
    <property type="project" value="InterPro"/>
</dbReference>
<dbReference type="Gene3D" id="3.30.1070.10">
    <property type="entry name" value="Cell division topological specificity factor MinE"/>
    <property type="match status" value="1"/>
</dbReference>
<dbReference type="HAMAP" id="MF_00262">
    <property type="entry name" value="MinE"/>
    <property type="match status" value="1"/>
</dbReference>
<dbReference type="InterPro" id="IPR005527">
    <property type="entry name" value="MinE"/>
</dbReference>
<dbReference type="InterPro" id="IPR036707">
    <property type="entry name" value="MinE_sf"/>
</dbReference>
<dbReference type="NCBIfam" id="TIGR01215">
    <property type="entry name" value="minE"/>
    <property type="match status" value="1"/>
</dbReference>
<dbReference type="NCBIfam" id="NF001422">
    <property type="entry name" value="PRK00296.1"/>
    <property type="match status" value="1"/>
</dbReference>
<dbReference type="Pfam" id="PF03776">
    <property type="entry name" value="MinE"/>
    <property type="match status" value="1"/>
</dbReference>
<dbReference type="SUPFAM" id="SSF55229">
    <property type="entry name" value="Cell division protein MinE topological specificity domain"/>
    <property type="match status" value="1"/>
</dbReference>
<gene>
    <name evidence="1" type="primary">minE</name>
    <name type="ordered locus">ACICU_00830</name>
</gene>
<keyword id="KW-0131">Cell cycle</keyword>
<keyword id="KW-0132">Cell division</keyword>
<reference key="1">
    <citation type="journal article" date="2008" name="Antimicrob. Agents Chemother.">
        <title>Whole-genome pyrosequencing of an epidemic multidrug-resistant Acinetobacter baumannii strain belonging to the European clone II group.</title>
        <authorList>
            <person name="Iacono M."/>
            <person name="Villa L."/>
            <person name="Fortini D."/>
            <person name="Bordoni R."/>
            <person name="Imperi F."/>
            <person name="Bonnal R.J."/>
            <person name="Sicheritz-Ponten T."/>
            <person name="De Bellis G."/>
            <person name="Visca P."/>
            <person name="Cassone A."/>
            <person name="Carattoli A."/>
        </authorList>
    </citation>
    <scope>NUCLEOTIDE SEQUENCE [LARGE SCALE GENOMIC DNA]</scope>
    <source>
        <strain>ACICU</strain>
    </source>
</reference>
<sequence>MAGFWSKLFSSEEKPSSAQTAKDRLKVIVASEQGLGRRLSQDKIDQMKKEIMQVVSRYVSGVGEQHIQMQVRSEANIEMLEMNINLPEER</sequence>
<comment type="function">
    <text evidence="1">Prevents the cell division inhibition by proteins MinC and MinD at internal division sites while permitting inhibition at polar sites. This ensures cell division at the proper site by restricting the formation of a division septum at the midpoint of the long axis of the cell.</text>
</comment>
<comment type="similarity">
    <text evidence="1">Belongs to the MinE family.</text>
</comment>
<protein>
    <recommendedName>
        <fullName evidence="1">Cell division topological specificity factor</fullName>
    </recommendedName>
</protein>